<protein>
    <recommendedName>
        <fullName evidence="1">Glucosamine-6-phosphate deaminase</fullName>
        <ecNumber evidence="1">3.5.99.6</ecNumber>
    </recommendedName>
    <alternativeName>
        <fullName evidence="1">GlcN6P deaminase</fullName>
        <shortName evidence="1">GNPDA</shortName>
    </alternativeName>
    <alternativeName>
        <fullName evidence="1">Glucosamine-6-phosphate isomerase</fullName>
    </alternativeName>
</protein>
<reference key="1">
    <citation type="journal article" date="2005" name="J. Bacteriol.">
        <title>Insights on evolution of virulence and resistance from the complete genome analysis of an early methicillin-resistant Staphylococcus aureus strain and a biofilm-producing methicillin-resistant Staphylococcus epidermidis strain.</title>
        <authorList>
            <person name="Gill S.R."/>
            <person name="Fouts D.E."/>
            <person name="Archer G.L."/>
            <person name="Mongodin E.F."/>
            <person name="DeBoy R.T."/>
            <person name="Ravel J."/>
            <person name="Paulsen I.T."/>
            <person name="Kolonay J.F."/>
            <person name="Brinkac L.M."/>
            <person name="Beanan M.J."/>
            <person name="Dodson R.J."/>
            <person name="Daugherty S.C."/>
            <person name="Madupu R."/>
            <person name="Angiuoli S.V."/>
            <person name="Durkin A.S."/>
            <person name="Haft D.H."/>
            <person name="Vamathevan J.J."/>
            <person name="Khouri H."/>
            <person name="Utterback T.R."/>
            <person name="Lee C."/>
            <person name="Dimitrov G."/>
            <person name="Jiang L."/>
            <person name="Qin H."/>
            <person name="Weidman J."/>
            <person name="Tran K."/>
            <person name="Kang K.H."/>
            <person name="Hance I.R."/>
            <person name="Nelson K.E."/>
            <person name="Fraser C.M."/>
        </authorList>
    </citation>
    <scope>NUCLEOTIDE SEQUENCE [LARGE SCALE GENOMIC DNA]</scope>
    <source>
        <strain>ATCC 35984 / DSM 28319 / BCRC 17069 / CCUG 31568 / BM 3577 / RP62A</strain>
    </source>
</reference>
<accession>Q5HRH8</accession>
<organism>
    <name type="scientific">Staphylococcus epidermidis (strain ATCC 35984 / DSM 28319 / BCRC 17069 / CCUG 31568 / BM 3577 / RP62A)</name>
    <dbReference type="NCBI Taxonomy" id="176279"/>
    <lineage>
        <taxon>Bacteria</taxon>
        <taxon>Bacillati</taxon>
        <taxon>Bacillota</taxon>
        <taxon>Bacilli</taxon>
        <taxon>Bacillales</taxon>
        <taxon>Staphylococcaceae</taxon>
        <taxon>Staphylococcus</taxon>
    </lineage>
</organism>
<keyword id="KW-0119">Carbohydrate metabolism</keyword>
<keyword id="KW-0378">Hydrolase</keyword>
<keyword id="KW-1185">Reference proteome</keyword>
<name>NAGB_STAEQ</name>
<dbReference type="EC" id="3.5.99.6" evidence="1"/>
<dbReference type="EMBL" id="CP000029">
    <property type="protein sequence ID" value="AAW53587.1"/>
    <property type="molecule type" value="Genomic_DNA"/>
</dbReference>
<dbReference type="RefSeq" id="WP_002475564.1">
    <property type="nucleotide sequence ID" value="NC_002976.3"/>
</dbReference>
<dbReference type="SMR" id="Q5HRH8"/>
<dbReference type="STRING" id="176279.SERP0215"/>
<dbReference type="KEGG" id="ser:SERP0215"/>
<dbReference type="eggNOG" id="COG0363">
    <property type="taxonomic scope" value="Bacteria"/>
</dbReference>
<dbReference type="HOGENOM" id="CLU_049611_1_1_9"/>
<dbReference type="UniPathway" id="UPA00629">
    <property type="reaction ID" value="UER00684"/>
</dbReference>
<dbReference type="Proteomes" id="UP000000531">
    <property type="component" value="Chromosome"/>
</dbReference>
<dbReference type="GO" id="GO:0005737">
    <property type="term" value="C:cytoplasm"/>
    <property type="evidence" value="ECO:0007669"/>
    <property type="project" value="TreeGrafter"/>
</dbReference>
<dbReference type="GO" id="GO:0004342">
    <property type="term" value="F:glucosamine-6-phosphate deaminase activity"/>
    <property type="evidence" value="ECO:0007669"/>
    <property type="project" value="UniProtKB-UniRule"/>
</dbReference>
<dbReference type="GO" id="GO:0042802">
    <property type="term" value="F:identical protein binding"/>
    <property type="evidence" value="ECO:0007669"/>
    <property type="project" value="TreeGrafter"/>
</dbReference>
<dbReference type="GO" id="GO:0005975">
    <property type="term" value="P:carbohydrate metabolic process"/>
    <property type="evidence" value="ECO:0007669"/>
    <property type="project" value="InterPro"/>
</dbReference>
<dbReference type="GO" id="GO:0006043">
    <property type="term" value="P:glucosamine catabolic process"/>
    <property type="evidence" value="ECO:0007669"/>
    <property type="project" value="TreeGrafter"/>
</dbReference>
<dbReference type="GO" id="GO:0006046">
    <property type="term" value="P:N-acetylglucosamine catabolic process"/>
    <property type="evidence" value="ECO:0007669"/>
    <property type="project" value="TreeGrafter"/>
</dbReference>
<dbReference type="GO" id="GO:0019262">
    <property type="term" value="P:N-acetylneuraminate catabolic process"/>
    <property type="evidence" value="ECO:0007669"/>
    <property type="project" value="UniProtKB-UniRule"/>
</dbReference>
<dbReference type="CDD" id="cd01399">
    <property type="entry name" value="GlcN6P_deaminase"/>
    <property type="match status" value="1"/>
</dbReference>
<dbReference type="FunFam" id="3.40.50.1360:FF:000003">
    <property type="entry name" value="Glucosamine-6-phosphate deaminase"/>
    <property type="match status" value="1"/>
</dbReference>
<dbReference type="Gene3D" id="3.40.50.1360">
    <property type="match status" value="1"/>
</dbReference>
<dbReference type="HAMAP" id="MF_01241">
    <property type="entry name" value="GlcN6P_deamin"/>
    <property type="match status" value="1"/>
</dbReference>
<dbReference type="InterPro" id="IPR006148">
    <property type="entry name" value="Glc/Gal-6P_isomerase"/>
</dbReference>
<dbReference type="InterPro" id="IPR004547">
    <property type="entry name" value="Glucosamine6P_isomerase"/>
</dbReference>
<dbReference type="InterPro" id="IPR018321">
    <property type="entry name" value="Glucosamine6P_isomerase_CS"/>
</dbReference>
<dbReference type="InterPro" id="IPR037171">
    <property type="entry name" value="NagB/RpiA_transferase-like"/>
</dbReference>
<dbReference type="NCBIfam" id="TIGR00502">
    <property type="entry name" value="nagB"/>
    <property type="match status" value="1"/>
</dbReference>
<dbReference type="PANTHER" id="PTHR11280">
    <property type="entry name" value="GLUCOSAMINE-6-PHOSPHATE ISOMERASE"/>
    <property type="match status" value="1"/>
</dbReference>
<dbReference type="PANTHER" id="PTHR11280:SF5">
    <property type="entry name" value="GLUCOSAMINE-6-PHOSPHATE ISOMERASE"/>
    <property type="match status" value="1"/>
</dbReference>
<dbReference type="Pfam" id="PF01182">
    <property type="entry name" value="Glucosamine_iso"/>
    <property type="match status" value="1"/>
</dbReference>
<dbReference type="SUPFAM" id="SSF100950">
    <property type="entry name" value="NagB/RpiA/CoA transferase-like"/>
    <property type="match status" value="1"/>
</dbReference>
<dbReference type="PROSITE" id="PS01161">
    <property type="entry name" value="GLC_GALNAC_ISOMERASE"/>
    <property type="match status" value="1"/>
</dbReference>
<feature type="chain" id="PRO_0000160169" description="Glucosamine-6-phosphate deaminase">
    <location>
        <begin position="1"/>
        <end position="243"/>
    </location>
</feature>
<feature type="active site" description="Proton acceptor; for enolization step" evidence="1">
    <location>
        <position position="67"/>
    </location>
</feature>
<feature type="active site" description="For ring-opening step" evidence="1">
    <location>
        <position position="137"/>
    </location>
</feature>
<feature type="active site" description="Proton acceptor; for ring-opening step" evidence="1">
    <location>
        <position position="139"/>
    </location>
</feature>
<feature type="active site" description="For ring-opening step" evidence="1">
    <location>
        <position position="144"/>
    </location>
</feature>
<comment type="function">
    <text evidence="1">Catalyzes the reversible isomerization-deamination of glucosamine 6-phosphate (GlcN6P) to form fructose 6-phosphate (Fru6P) and ammonium ion.</text>
</comment>
<comment type="catalytic activity">
    <reaction evidence="1">
        <text>alpha-D-glucosamine 6-phosphate + H2O = beta-D-fructose 6-phosphate + NH4(+)</text>
        <dbReference type="Rhea" id="RHEA:12172"/>
        <dbReference type="ChEBI" id="CHEBI:15377"/>
        <dbReference type="ChEBI" id="CHEBI:28938"/>
        <dbReference type="ChEBI" id="CHEBI:57634"/>
        <dbReference type="ChEBI" id="CHEBI:75989"/>
        <dbReference type="EC" id="3.5.99.6"/>
    </reaction>
</comment>
<comment type="pathway">
    <text evidence="1">Amino-sugar metabolism; N-acetylneuraminate degradation; D-fructose 6-phosphate from N-acetylneuraminate: step 5/5.</text>
</comment>
<comment type="similarity">
    <text evidence="1">Belongs to the glucosamine/galactosamine-6-phosphate isomerase family. NagB subfamily.</text>
</comment>
<evidence type="ECO:0000255" key="1">
    <source>
        <dbReference type="HAMAP-Rule" id="MF_01241"/>
    </source>
</evidence>
<proteinExistence type="inferred from homology"/>
<sequence>MKMINLDSKKLASFYVACELFKQIQQYPHTKLGLATGGTMTDVYHYLVNLLTKNKADVSQVETFNLDEYVGLKASHQQSYHTYMNKVLFEQYPHFAKNHIHIPDGYSENLEAEAERYNKLLDERGPIDIQILGIGENGHIGFNEPGTDFNSETHVVNLTESTIKANSRYFDNEADVPRQAVSMGLASILKAKRIILLAFGPKKKEAISKLLNEQVTEDVPATILHTHPNVEVYVDDDAAPDCL</sequence>
<gene>
    <name evidence="1" type="primary">nagB</name>
    <name type="ordered locus">SERP0215</name>
</gene>